<gene>
    <name type="ordered locus">MS0844</name>
</gene>
<name>Y844_MANSM</name>
<dbReference type="EMBL" id="AE016827">
    <property type="protein sequence ID" value="AAU37451.1"/>
    <property type="molecule type" value="Genomic_DNA"/>
</dbReference>
<dbReference type="RefSeq" id="WP_011200022.1">
    <property type="nucleotide sequence ID" value="NC_006300.1"/>
</dbReference>
<dbReference type="STRING" id="221988.MS0844"/>
<dbReference type="KEGG" id="msu:MS0844"/>
<dbReference type="eggNOG" id="COG3110">
    <property type="taxonomic scope" value="Bacteria"/>
</dbReference>
<dbReference type="HOGENOM" id="CLU_073782_2_0_6"/>
<dbReference type="OrthoDB" id="6428208at2"/>
<dbReference type="Proteomes" id="UP000000607">
    <property type="component" value="Chromosome"/>
</dbReference>
<dbReference type="HAMAP" id="MF_00789">
    <property type="entry name" value="UPF0319"/>
    <property type="match status" value="1"/>
</dbReference>
<dbReference type="InterPro" id="IPR018635">
    <property type="entry name" value="UPF0319"/>
</dbReference>
<dbReference type="NCBIfam" id="NF002516">
    <property type="entry name" value="PRK01904.1"/>
    <property type="match status" value="1"/>
</dbReference>
<dbReference type="PANTHER" id="PTHR38108">
    <property type="entry name" value="UPF0319 PROTEIN YCCT"/>
    <property type="match status" value="1"/>
</dbReference>
<dbReference type="PANTHER" id="PTHR38108:SF1">
    <property type="entry name" value="UPF0319 PROTEIN YCCT"/>
    <property type="match status" value="1"/>
</dbReference>
<dbReference type="Pfam" id="PF09829">
    <property type="entry name" value="DUF2057"/>
    <property type="match status" value="1"/>
</dbReference>
<protein>
    <recommendedName>
        <fullName evidence="1">UPF0319 protein MS0844</fullName>
    </recommendedName>
</protein>
<organism>
    <name type="scientific">Mannheimia succiniciproducens (strain KCTC 0769BP / MBEL55E)</name>
    <dbReference type="NCBI Taxonomy" id="221988"/>
    <lineage>
        <taxon>Bacteria</taxon>
        <taxon>Pseudomonadati</taxon>
        <taxon>Pseudomonadota</taxon>
        <taxon>Gammaproteobacteria</taxon>
        <taxon>Pasteurellales</taxon>
        <taxon>Pasteurellaceae</taxon>
        <taxon>Basfia</taxon>
    </lineage>
</organism>
<comment type="similarity">
    <text evidence="1">Belongs to the UPF0319 family.</text>
</comment>
<evidence type="ECO:0000255" key="1">
    <source>
        <dbReference type="HAMAP-Rule" id="MF_00789"/>
    </source>
</evidence>
<proteinExistence type="inferred from homology"/>
<accession>Q65UA9</accession>
<sequence length="219" mass="23552">MKFRLTALAVAALLTSTASFAGVVTTSSNVDFLAIDGQKASKSLIKQARSFNITDTNQHQVVVRVSEIIRGGSESNLFESDPIVVTFQGTTEDIQISAPTLRSERDVEKFKQSPVISVTTASGAAVQTKQEYLTQEGFLPSVNLVENLSNYNASGAKAAVASFATTTMPTAMGTTGAGKVAKGKVTVQGENAAEQMLQYWFQQADKETQTRFLNWAKKQ</sequence>
<feature type="signal peptide" evidence="1">
    <location>
        <begin position="1"/>
        <end position="21"/>
    </location>
</feature>
<feature type="chain" id="PRO_0000036298" description="UPF0319 protein MS0844">
    <location>
        <begin position="22"/>
        <end position="219"/>
    </location>
</feature>
<reference key="1">
    <citation type="journal article" date="2004" name="Nat. Biotechnol.">
        <title>The genome sequence of the capnophilic rumen bacterium Mannheimia succiniciproducens.</title>
        <authorList>
            <person name="Hong S.H."/>
            <person name="Kim J.S."/>
            <person name="Lee S.Y."/>
            <person name="In Y.H."/>
            <person name="Choi S.S."/>
            <person name="Rih J.-K."/>
            <person name="Kim C.H."/>
            <person name="Jeong H."/>
            <person name="Hur C.G."/>
            <person name="Kim J.J."/>
        </authorList>
    </citation>
    <scope>NUCLEOTIDE SEQUENCE [LARGE SCALE GENOMIC DNA]</scope>
    <source>
        <strain>KCTC 0769BP / MBEL55E</strain>
    </source>
</reference>
<keyword id="KW-0732">Signal</keyword>